<accession>Q9H195</accession>
<accession>Q6W762</accession>
<accession>Q7LDU5</accession>
<accession>Q9GZZ2</accession>
<accession>Q9UN95</accession>
<comment type="function">
    <text evidence="1">Major glycoprotein component of a variety of mucus gels. Thought to provide a protective, lubricating barrier against particles and infectious agents at mucosal surfaces (By similarity).</text>
</comment>
<comment type="subcellular location">
    <subcellularLocation>
        <location evidence="9">Membrane</location>
        <topology evidence="9">Single-pass membrane protein</topology>
    </subcellularLocation>
</comment>
<comment type="tissue specificity">
    <text evidence="7 8">Fetal and adult small intestine and fetal and adult colon.</text>
</comment>
<comment type="PTM">
    <text evidence="1">Highly O-glycosylated and probably also N-glycosylated.</text>
</comment>
<comment type="caution">
    <text evidence="9">Gene prediction based on partial mRNA data. This gene is not currently present in the reference genome assembly (GRCh38/hg38) and is probably the result of a gene duplication of MUC3A.</text>
</comment>
<comment type="online information" name="Mucin database">
    <link uri="http://www.medkem.gu.se/mucinbiology/databases/"/>
</comment>
<reference key="1">
    <citation type="journal article" date="2000" name="Biochem. Biophys. Res. Commun.">
        <title>Multiple transcripts of MUC3: evidence for two genes, MUC3A and MUC3B.</title>
        <authorList>
            <person name="Pratt W.S."/>
            <person name="Crawley S."/>
            <person name="Hicks J."/>
            <person name="Ho J."/>
            <person name="Nash M."/>
            <person name="Kim Y.S."/>
            <person name="Gum J.R."/>
            <person name="Swallow D.M."/>
        </authorList>
    </citation>
    <scope>NUCLEOTIDE SEQUENCE [GENOMIC DNA] OF 12577-13477</scope>
    <scope>TISSUE SPECIFICITY</scope>
</reference>
<reference key="2">
    <citation type="journal article" date="2001" name="J. Hum. Genet.">
        <title>Associations of distinct variants of the intestinal mucin gene MUC3A with ulcerative colitis and Crohn's disease.</title>
        <authorList>
            <person name="Kyo K."/>
            <person name="Muto T."/>
            <person name="Nagawa H."/>
            <person name="Lathrop G.M."/>
            <person name="Nakamura Y."/>
        </authorList>
    </citation>
    <scope>NUCLEOTIDE SEQUENCE [GENOMIC DNA / MRNA] OF 12600-13477</scope>
    <scope>TISSUE SPECIFICITY</scope>
    <source>
        <tissue>Small intestine</tissue>
    </source>
</reference>
<reference key="3">
    <citation type="journal article" date="1997" name="J. Biol. Chem.">
        <title>MUC3 human intestinal mucin. Analysis of gene structure, the carboxyl terminus, and a novel upstream repetitive region.</title>
        <authorList>
            <person name="Gum J.R. Jr."/>
            <person name="Ho J.J.L."/>
            <person name="Pratt W.S."/>
            <person name="Hicks J.W."/>
            <person name="Hill A.S."/>
            <person name="Vinall L.E."/>
            <person name="Roberton A.M."/>
            <person name="Swallow D.M."/>
            <person name="Kim Y.S."/>
        </authorList>
    </citation>
    <scope>NUCLEOTIDE SEQUENCE [GENOMIC DNA] OF 13099-13121</scope>
    <source>
        <tissue>Intestine</tissue>
    </source>
</reference>
<reference key="4">
    <citation type="journal article" date="1999" name="Biochem. Biophys. Res. Commun.">
        <title>The MUC3 gene encodes a transmembrane mucin and is alternatively spliced.</title>
        <authorList>
            <person name="Williams S.J."/>
            <person name="Munster D.J."/>
            <person name="Quin R.J."/>
            <person name="Gotley D.C."/>
            <person name="McGuckin M.A."/>
        </authorList>
    </citation>
    <scope>NUCLEOTIDE SEQUENCE [MRNA] OF 13112-13477</scope>
    <scope>VARIANTS VAL-13274 AND TYR-13453</scope>
    <source>
        <tissue>Colon mucosa</tissue>
    </source>
</reference>
<reference key="5">
    <citation type="journal article" date="2003" name="J. Biol. Chem.">
        <title>Initiation of transcription of the MUC3A human intestinal mucin from a TATA-less promoter and comparison with the MUC3B amino terminus.</title>
        <authorList>
            <person name="Gum J.R. Jr."/>
            <person name="Hicks J.W."/>
            <person name="Crawley S.C."/>
            <person name="Dahl C.M."/>
            <person name="Yang S.C."/>
            <person name="Roberton A.M."/>
            <person name="Kim Y.S."/>
        </authorList>
    </citation>
    <scope>PARTIAL NUCLEOTIDE SEQUENCE [MRNA]</scope>
</reference>
<organism>
    <name type="scientific">Homo sapiens</name>
    <name type="common">Human</name>
    <dbReference type="NCBI Taxonomy" id="9606"/>
    <lineage>
        <taxon>Eukaryota</taxon>
        <taxon>Metazoa</taxon>
        <taxon>Chordata</taxon>
        <taxon>Craniata</taxon>
        <taxon>Vertebrata</taxon>
        <taxon>Euteleostomi</taxon>
        <taxon>Mammalia</taxon>
        <taxon>Eutheria</taxon>
        <taxon>Euarchontoglires</taxon>
        <taxon>Primates</taxon>
        <taxon>Haplorrhini</taxon>
        <taxon>Catarrhini</taxon>
        <taxon>Hominidae</taxon>
        <taxon>Homo</taxon>
    </lineage>
</organism>
<evidence type="ECO:0000250" key="1"/>
<evidence type="ECO:0000255" key="2"/>
<evidence type="ECO:0000255" key="3">
    <source>
        <dbReference type="PROSITE-ProRule" id="PRU00076"/>
    </source>
</evidence>
<evidence type="ECO:0000255" key="4">
    <source>
        <dbReference type="PROSITE-ProRule" id="PRU00188"/>
    </source>
</evidence>
<evidence type="ECO:0000256" key="5">
    <source>
        <dbReference type="SAM" id="MobiDB-lite"/>
    </source>
</evidence>
<evidence type="ECO:0000269" key="6">
    <source>
    </source>
</evidence>
<evidence type="ECO:0000269" key="7">
    <source>
    </source>
</evidence>
<evidence type="ECO:0000269" key="8">
    <source>
    </source>
</evidence>
<evidence type="ECO:0000305" key="9"/>
<evidence type="ECO:0000305" key="10">
    <source>
    </source>
</evidence>
<evidence type="ECO:0000312" key="11">
    <source>
        <dbReference type="HGNC" id="HGNC:13384"/>
    </source>
</evidence>
<keyword id="KW-0068">Autocatalytic cleavage</keyword>
<keyword id="KW-1015">Disulfide bond</keyword>
<keyword id="KW-0245">EGF-like domain</keyword>
<keyword id="KW-0325">Glycoprotein</keyword>
<keyword id="KW-0472">Membrane</keyword>
<keyword id="KW-1267">Proteomics identification</keyword>
<keyword id="KW-1185">Reference proteome</keyword>
<keyword id="KW-0732">Signal</keyword>
<keyword id="KW-0812">Transmembrane</keyword>
<keyword id="KW-1133">Transmembrane helix</keyword>
<protein>
    <recommendedName>
        <fullName evidence="9">Mucin-3B</fullName>
        <shortName evidence="9">MUC-3B</shortName>
    </recommendedName>
    <alternativeName>
        <fullName evidence="10">Intestinal mucin-3B</fullName>
    </alternativeName>
</protein>
<proteinExistence type="evidence at protein level"/>
<feature type="signal peptide" evidence="2">
    <location>
        <begin position="1"/>
        <end position="21"/>
    </location>
</feature>
<feature type="chain" id="PRO_0000262551" description="Mucin-3B">
    <location>
        <begin position="22"/>
        <end position="13477"/>
    </location>
</feature>
<feature type="transmembrane region" description="Helical" evidence="2">
    <location>
        <begin position="13381"/>
        <end position="13401"/>
    </location>
</feature>
<feature type="domain" description="EGF-like" evidence="3">
    <location>
        <begin position="13130"/>
        <end position="13163"/>
    </location>
</feature>
<feature type="domain" description="SEA" evidence="4">
    <location>
        <begin position="13172"/>
        <end position="13297"/>
    </location>
</feature>
<feature type="region of interest" description="Disordered" evidence="5">
    <location>
        <begin position="219"/>
        <end position="243"/>
    </location>
</feature>
<feature type="region of interest" description="Disordered" evidence="5">
    <location>
        <begin position="327"/>
        <end position="347"/>
    </location>
</feature>
<feature type="region of interest" description="Disordered" evidence="5">
    <location>
        <begin position="360"/>
        <end position="383"/>
    </location>
</feature>
<feature type="region of interest" description="Disordered" evidence="5">
    <location>
        <begin position="513"/>
        <end position="559"/>
    </location>
</feature>
<feature type="region of interest" description="Disordered" evidence="5">
    <location>
        <begin position="622"/>
        <end position="643"/>
    </location>
</feature>
<feature type="region of interest" description="Disordered" evidence="5">
    <location>
        <begin position="815"/>
        <end position="839"/>
    </location>
</feature>
<feature type="region of interest" description="Disordered" evidence="5">
    <location>
        <begin position="923"/>
        <end position="968"/>
    </location>
</feature>
<feature type="region of interest" description="Disordered" evidence="5">
    <location>
        <begin position="1154"/>
        <end position="1179"/>
    </location>
</feature>
<feature type="region of interest" description="Disordered" evidence="5">
    <location>
        <begin position="1480"/>
        <end position="1511"/>
    </location>
</feature>
<feature type="region of interest" description="Disordered" evidence="5">
    <location>
        <begin position="1529"/>
        <end position="1601"/>
    </location>
</feature>
<feature type="region of interest" description="Disordered" evidence="5">
    <location>
        <begin position="1619"/>
        <end position="1638"/>
    </location>
</feature>
<feature type="region of interest" description="Disordered" evidence="5">
    <location>
        <begin position="1692"/>
        <end position="1714"/>
    </location>
</feature>
<feature type="region of interest" description="Disordered" evidence="5">
    <location>
        <begin position="1944"/>
        <end position="1968"/>
    </location>
</feature>
<feature type="region of interest" description="Disordered" evidence="5">
    <location>
        <begin position="2064"/>
        <end position="2123"/>
    </location>
</feature>
<feature type="region of interest" description="Disordered" evidence="5">
    <location>
        <begin position="2170"/>
        <end position="2197"/>
    </location>
</feature>
<feature type="region of interest" description="Disordered" evidence="5">
    <location>
        <begin position="2275"/>
        <end position="2308"/>
    </location>
</feature>
<feature type="region of interest" description="Disordered" evidence="5">
    <location>
        <begin position="2442"/>
        <end position="2462"/>
    </location>
</feature>
<feature type="region of interest" description="Disordered" evidence="5">
    <location>
        <begin position="2476"/>
        <end position="2497"/>
    </location>
</feature>
<feature type="region of interest" description="Disordered" evidence="5">
    <location>
        <begin position="2509"/>
        <end position="2537"/>
    </location>
</feature>
<feature type="region of interest" description="Disordered" evidence="5">
    <location>
        <begin position="2591"/>
        <end position="2610"/>
    </location>
</feature>
<feature type="region of interest" description="Disordered" evidence="5">
    <location>
        <begin position="2672"/>
        <end position="2717"/>
    </location>
</feature>
<feature type="region of interest" description="Disordered" evidence="5">
    <location>
        <begin position="2812"/>
        <end position="2832"/>
    </location>
</feature>
<feature type="region of interest" description="Disordered" evidence="5">
    <location>
        <begin position="2845"/>
        <end position="2867"/>
    </location>
</feature>
<feature type="region of interest" description="Disordered" evidence="5">
    <location>
        <begin position="2922"/>
        <end position="2947"/>
    </location>
</feature>
<feature type="region of interest" description="Disordered" evidence="5">
    <location>
        <begin position="3074"/>
        <end position="3109"/>
    </location>
</feature>
<feature type="region of interest" description="Disordered" evidence="5">
    <location>
        <begin position="3309"/>
        <end position="3395"/>
    </location>
</feature>
<feature type="region of interest" description="Disordered" evidence="5">
    <location>
        <begin position="3420"/>
        <end position="3481"/>
    </location>
</feature>
<feature type="region of interest" description="Disordered" evidence="5">
    <location>
        <begin position="3545"/>
        <end position="3565"/>
    </location>
</feature>
<feature type="region of interest" description="Disordered" evidence="5">
    <location>
        <begin position="3654"/>
        <end position="3727"/>
    </location>
</feature>
<feature type="region of interest" description="Disordered" evidence="5">
    <location>
        <begin position="3740"/>
        <end position="3812"/>
    </location>
</feature>
<feature type="region of interest" description="Disordered" evidence="5">
    <location>
        <begin position="4014"/>
        <end position="4047"/>
    </location>
</feature>
<feature type="region of interest" description="Disordered" evidence="5">
    <location>
        <begin position="4067"/>
        <end position="4106"/>
    </location>
</feature>
<feature type="region of interest" description="Disordered" evidence="5">
    <location>
        <begin position="4182"/>
        <end position="4249"/>
    </location>
</feature>
<feature type="region of interest" description="Disordered" evidence="5">
    <location>
        <begin position="4269"/>
        <end position="4313"/>
    </location>
</feature>
<feature type="region of interest" description="Disordered" evidence="5">
    <location>
        <begin position="4510"/>
        <end position="4530"/>
    </location>
</feature>
<feature type="region of interest" description="Disordered" evidence="5">
    <location>
        <begin position="4557"/>
        <end position="4617"/>
    </location>
</feature>
<feature type="region of interest" description="Disordered" evidence="5">
    <location>
        <begin position="4630"/>
        <end position="4651"/>
    </location>
</feature>
<feature type="region of interest" description="Disordered" evidence="5">
    <location>
        <begin position="4802"/>
        <end position="4830"/>
    </location>
</feature>
<feature type="region of interest" description="Disordered" evidence="5">
    <location>
        <begin position="4953"/>
        <end position="4986"/>
    </location>
</feature>
<feature type="region of interest" description="Disordered" evidence="5">
    <location>
        <begin position="5128"/>
        <end position="5203"/>
    </location>
</feature>
<feature type="region of interest" description="Disordered" evidence="5">
    <location>
        <begin position="5455"/>
        <end position="5486"/>
    </location>
</feature>
<feature type="region of interest" description="Disordered" evidence="5">
    <location>
        <begin position="5627"/>
        <end position="5680"/>
    </location>
</feature>
<feature type="region of interest" description="Disordered" evidence="5">
    <location>
        <begin position="5834"/>
        <end position="5908"/>
    </location>
</feature>
<feature type="region of interest" description="Disordered" evidence="5">
    <location>
        <begin position="5957"/>
        <end position="5977"/>
    </location>
</feature>
<feature type="region of interest" description="Disordered" evidence="5">
    <location>
        <begin position="5990"/>
        <end position="6017"/>
    </location>
</feature>
<feature type="region of interest" description="Disordered" evidence="5">
    <location>
        <begin position="6030"/>
        <end position="6080"/>
    </location>
</feature>
<feature type="region of interest" description="Disordered" evidence="5">
    <location>
        <begin position="6120"/>
        <end position="6150"/>
    </location>
</feature>
<feature type="region of interest" description="Disordered" evidence="5">
    <location>
        <begin position="6172"/>
        <end position="6197"/>
    </location>
</feature>
<feature type="region of interest" description="Disordered" evidence="5">
    <location>
        <begin position="6456"/>
        <end position="6481"/>
    </location>
</feature>
<feature type="region of interest" description="Disordered" evidence="5">
    <location>
        <begin position="6541"/>
        <end position="6598"/>
    </location>
</feature>
<feature type="region of interest" description="Disordered" evidence="5">
    <location>
        <begin position="6846"/>
        <end position="6867"/>
    </location>
</feature>
<feature type="region of interest" description="Disordered" evidence="5">
    <location>
        <begin position="6946"/>
        <end position="6971"/>
    </location>
</feature>
<feature type="region of interest" description="Disordered" evidence="5">
    <location>
        <begin position="6999"/>
        <end position="7021"/>
    </location>
</feature>
<feature type="region of interest" description="Disordered" evidence="5">
    <location>
        <begin position="7067"/>
        <end position="7093"/>
    </location>
</feature>
<feature type="region of interest" description="Disordered" evidence="5">
    <location>
        <begin position="7170"/>
        <end position="7206"/>
    </location>
</feature>
<feature type="region of interest" description="Disordered" evidence="5">
    <location>
        <begin position="7225"/>
        <end position="7244"/>
    </location>
</feature>
<feature type="region of interest" description="Disordered" evidence="5">
    <location>
        <begin position="7299"/>
        <end position="7329"/>
    </location>
</feature>
<feature type="region of interest" description="Disordered" evidence="5">
    <location>
        <begin position="7400"/>
        <end position="7433"/>
    </location>
</feature>
<feature type="region of interest" description="Disordered" evidence="5">
    <location>
        <begin position="7476"/>
        <end position="7532"/>
    </location>
</feature>
<feature type="region of interest" description="Disordered" evidence="5">
    <location>
        <begin position="7578"/>
        <end position="7600"/>
    </location>
</feature>
<feature type="region of interest" description="Disordered" evidence="5">
    <location>
        <begin position="7731"/>
        <end position="7766"/>
    </location>
</feature>
<feature type="region of interest" description="Disordered" evidence="5">
    <location>
        <begin position="7922"/>
        <end position="7996"/>
    </location>
</feature>
<feature type="region of interest" description="Disordered" evidence="5">
    <location>
        <begin position="8036"/>
        <end position="8066"/>
    </location>
</feature>
<feature type="region of interest" description="Disordered" evidence="5">
    <location>
        <begin position="8088"/>
        <end position="8113"/>
    </location>
</feature>
<feature type="region of interest" description="Disordered" evidence="5">
    <location>
        <begin position="8372"/>
        <end position="8397"/>
    </location>
</feature>
<feature type="region of interest" description="Disordered" evidence="5">
    <location>
        <begin position="8457"/>
        <end position="8514"/>
    </location>
</feature>
<feature type="region of interest" description="Disordered" evidence="5">
    <location>
        <begin position="8762"/>
        <end position="8783"/>
    </location>
</feature>
<feature type="region of interest" description="Disordered" evidence="5">
    <location>
        <begin position="8862"/>
        <end position="8887"/>
    </location>
</feature>
<feature type="region of interest" description="Disordered" evidence="5">
    <location>
        <begin position="8915"/>
        <end position="8941"/>
    </location>
</feature>
<feature type="region of interest" description="Disordered" evidence="5">
    <location>
        <begin position="8983"/>
        <end position="9009"/>
    </location>
</feature>
<feature type="region of interest" description="Disordered" evidence="5">
    <location>
        <begin position="9052"/>
        <end position="9122"/>
    </location>
</feature>
<feature type="region of interest" description="Disordered" evidence="5">
    <location>
        <begin position="9141"/>
        <end position="9160"/>
    </location>
</feature>
<feature type="region of interest" description="Disordered" evidence="5">
    <location>
        <begin position="9215"/>
        <end position="9240"/>
    </location>
</feature>
<feature type="region of interest" description="Disordered" evidence="5">
    <location>
        <begin position="9335"/>
        <end position="9366"/>
    </location>
</feature>
<feature type="region of interest" description="Disordered" evidence="5">
    <location>
        <begin position="9409"/>
        <end position="9465"/>
    </location>
</feature>
<feature type="region of interest" description="Disordered" evidence="5">
    <location>
        <begin position="9566"/>
        <end position="9589"/>
    </location>
</feature>
<feature type="region of interest" description="Disordered" evidence="5">
    <location>
        <begin position="9612"/>
        <end position="9674"/>
    </location>
</feature>
<feature type="region of interest" description="Disordered" evidence="5">
    <location>
        <begin position="9734"/>
        <end position="9760"/>
    </location>
</feature>
<feature type="region of interest" description="Disordered" evidence="5">
    <location>
        <begin position="9828"/>
        <end position="9859"/>
    </location>
</feature>
<feature type="region of interest" description="Disordered" evidence="5">
    <location>
        <begin position="9883"/>
        <end position="9908"/>
    </location>
</feature>
<feature type="region of interest" description="Disordered" evidence="5">
    <location>
        <begin position="9921"/>
        <end position="9973"/>
    </location>
</feature>
<feature type="region of interest" description="Disordered" evidence="5">
    <location>
        <begin position="10076"/>
        <end position="10099"/>
    </location>
</feature>
<feature type="region of interest" description="Disordered" evidence="5">
    <location>
        <begin position="10120"/>
        <end position="10166"/>
    </location>
</feature>
<feature type="region of interest" description="Disordered" evidence="5">
    <location>
        <begin position="10189"/>
        <end position="10285"/>
    </location>
</feature>
<feature type="region of interest" description="Disordered" evidence="5">
    <location>
        <begin position="10389"/>
        <end position="10425"/>
    </location>
</feature>
<feature type="region of interest" description="Disordered" evidence="5">
    <location>
        <begin position="10462"/>
        <end position="10481"/>
    </location>
</feature>
<feature type="region of interest" description="Disordered" evidence="5">
    <location>
        <begin position="10501"/>
        <end position="10537"/>
    </location>
</feature>
<feature type="region of interest" description="Disordered" evidence="5">
    <location>
        <begin position="10640"/>
        <end position="10660"/>
    </location>
</feature>
<feature type="region of interest" description="Disordered" evidence="5">
    <location>
        <begin position="10750"/>
        <end position="10828"/>
    </location>
</feature>
<feature type="region of interest" description="Disordered" evidence="5">
    <location>
        <begin position="10887"/>
        <end position="11032"/>
    </location>
</feature>
<feature type="region of interest" description="Disordered" evidence="5">
    <location>
        <begin position="11044"/>
        <end position="11065"/>
    </location>
</feature>
<feature type="region of interest" description="Disordered" evidence="5">
    <location>
        <begin position="11276"/>
        <end position="11317"/>
    </location>
</feature>
<feature type="region of interest" description="Disordered" evidence="5">
    <location>
        <begin position="11446"/>
        <end position="11482"/>
    </location>
</feature>
<feature type="region of interest" description="Disordered" evidence="5">
    <location>
        <begin position="11566"/>
        <end position="11697"/>
    </location>
</feature>
<feature type="region of interest" description="Disordered" evidence="5">
    <location>
        <begin position="11754"/>
        <end position="11779"/>
    </location>
</feature>
<feature type="region of interest" description="Disordered" evidence="5">
    <location>
        <begin position="11818"/>
        <end position="11949"/>
    </location>
</feature>
<feature type="region of interest" description="Disordered" evidence="5">
    <location>
        <begin position="12067"/>
        <end position="12103"/>
    </location>
</feature>
<feature type="region of interest" description="Disordered" evidence="5">
    <location>
        <begin position="12186"/>
        <end position="12220"/>
    </location>
</feature>
<feature type="region of interest" description="Disordered" evidence="5">
    <location>
        <begin position="12280"/>
        <end position="12323"/>
    </location>
</feature>
<feature type="region of interest" description="Disordered" evidence="5">
    <location>
        <begin position="12364"/>
        <end position="12452"/>
    </location>
</feature>
<feature type="region of interest" description="Disordered" evidence="5">
    <location>
        <begin position="12468"/>
        <end position="12578"/>
    </location>
</feature>
<feature type="region of interest" description="Disordered" evidence="5">
    <location>
        <begin position="12616"/>
        <end position="12639"/>
    </location>
</feature>
<feature type="region of interest" description="Disordered" evidence="5">
    <location>
        <begin position="12681"/>
        <end position="12700"/>
    </location>
</feature>
<feature type="region of interest" description="Disordered" evidence="5">
    <location>
        <begin position="12785"/>
        <end position="12805"/>
    </location>
</feature>
<feature type="region of interest" description="Disordered" evidence="5">
    <location>
        <begin position="12985"/>
        <end position="13011"/>
    </location>
</feature>
<feature type="region of interest" description="Disordered" evidence="5">
    <location>
        <begin position="13052"/>
        <end position="13086"/>
    </location>
</feature>
<feature type="compositionally biased region" description="Low complexity" evidence="5">
    <location>
        <begin position="219"/>
        <end position="234"/>
    </location>
</feature>
<feature type="compositionally biased region" description="Low complexity" evidence="5">
    <location>
        <begin position="513"/>
        <end position="538"/>
    </location>
</feature>
<feature type="compositionally biased region" description="Low complexity" evidence="5">
    <location>
        <begin position="547"/>
        <end position="559"/>
    </location>
</feature>
<feature type="compositionally biased region" description="Low complexity" evidence="5">
    <location>
        <begin position="1620"/>
        <end position="1638"/>
    </location>
</feature>
<feature type="compositionally biased region" description="Polar residues" evidence="5">
    <location>
        <begin position="1944"/>
        <end position="1956"/>
    </location>
</feature>
<feature type="compositionally biased region" description="Low complexity" evidence="5">
    <location>
        <begin position="1957"/>
        <end position="1968"/>
    </location>
</feature>
<feature type="compositionally biased region" description="Polar residues" evidence="5">
    <location>
        <begin position="2066"/>
        <end position="2091"/>
    </location>
</feature>
<feature type="compositionally biased region" description="Low complexity" evidence="5">
    <location>
        <begin position="2096"/>
        <end position="2107"/>
    </location>
</feature>
<feature type="compositionally biased region" description="Polar residues" evidence="5">
    <location>
        <begin position="2113"/>
        <end position="2123"/>
    </location>
</feature>
<feature type="compositionally biased region" description="Low complexity" evidence="5">
    <location>
        <begin position="2170"/>
        <end position="2185"/>
    </location>
</feature>
<feature type="compositionally biased region" description="Polar residues" evidence="5">
    <location>
        <begin position="2186"/>
        <end position="2195"/>
    </location>
</feature>
<feature type="compositionally biased region" description="Low complexity" evidence="5">
    <location>
        <begin position="2292"/>
        <end position="2308"/>
    </location>
</feature>
<feature type="compositionally biased region" description="Low complexity" evidence="5">
    <location>
        <begin position="2442"/>
        <end position="2458"/>
    </location>
</feature>
<feature type="compositionally biased region" description="Low complexity" evidence="5">
    <location>
        <begin position="2591"/>
        <end position="2603"/>
    </location>
</feature>
<feature type="compositionally biased region" description="Low complexity" evidence="5">
    <location>
        <begin position="2929"/>
        <end position="2944"/>
    </location>
</feature>
<feature type="compositionally biased region" description="Low complexity" evidence="5">
    <location>
        <begin position="3074"/>
        <end position="3097"/>
    </location>
</feature>
<feature type="compositionally biased region" description="Polar residues" evidence="5">
    <location>
        <begin position="3098"/>
        <end position="3109"/>
    </location>
</feature>
<feature type="compositionally biased region" description="Low complexity" evidence="5">
    <location>
        <begin position="3309"/>
        <end position="3359"/>
    </location>
</feature>
<feature type="compositionally biased region" description="Polar residues" evidence="5">
    <location>
        <begin position="3360"/>
        <end position="3370"/>
    </location>
</feature>
<feature type="compositionally biased region" description="Low complexity" evidence="5">
    <location>
        <begin position="3371"/>
        <end position="3385"/>
    </location>
</feature>
<feature type="compositionally biased region" description="Polar residues" evidence="5">
    <location>
        <begin position="3386"/>
        <end position="3395"/>
    </location>
</feature>
<feature type="compositionally biased region" description="Low complexity" evidence="5">
    <location>
        <begin position="3420"/>
        <end position="3452"/>
    </location>
</feature>
<feature type="compositionally biased region" description="Polar residues" evidence="5">
    <location>
        <begin position="3453"/>
        <end position="3462"/>
    </location>
</feature>
<feature type="compositionally biased region" description="Low complexity" evidence="5">
    <location>
        <begin position="3463"/>
        <end position="3481"/>
    </location>
</feature>
<feature type="compositionally biased region" description="Polar residues" evidence="5">
    <location>
        <begin position="3740"/>
        <end position="3749"/>
    </location>
</feature>
<feature type="compositionally biased region" description="Low complexity" evidence="5">
    <location>
        <begin position="3750"/>
        <end position="3785"/>
    </location>
</feature>
<feature type="compositionally biased region" description="Polar residues" evidence="5">
    <location>
        <begin position="3786"/>
        <end position="3812"/>
    </location>
</feature>
<feature type="compositionally biased region" description="Low complexity" evidence="5">
    <location>
        <begin position="4020"/>
        <end position="4042"/>
    </location>
</feature>
<feature type="compositionally biased region" description="Low complexity" evidence="5">
    <location>
        <begin position="4067"/>
        <end position="4096"/>
    </location>
</feature>
<feature type="compositionally biased region" description="Polar residues" evidence="5">
    <location>
        <begin position="4097"/>
        <end position="4106"/>
    </location>
</feature>
<feature type="compositionally biased region" description="Low complexity" evidence="5">
    <location>
        <begin position="4182"/>
        <end position="4228"/>
    </location>
</feature>
<feature type="compositionally biased region" description="Low complexity" evidence="5">
    <location>
        <begin position="4237"/>
        <end position="4249"/>
    </location>
</feature>
<feature type="compositionally biased region" description="Low complexity" evidence="5">
    <location>
        <begin position="4557"/>
        <end position="4574"/>
    </location>
</feature>
<feature type="compositionally biased region" description="Polar residues" evidence="5">
    <location>
        <begin position="4575"/>
        <end position="4601"/>
    </location>
</feature>
<feature type="compositionally biased region" description="Low complexity" evidence="5">
    <location>
        <begin position="4602"/>
        <end position="4617"/>
    </location>
</feature>
<feature type="compositionally biased region" description="Low complexity" evidence="5">
    <location>
        <begin position="4802"/>
        <end position="4827"/>
    </location>
</feature>
<feature type="compositionally biased region" description="Low complexity" evidence="5">
    <location>
        <begin position="5137"/>
        <end position="5158"/>
    </location>
</feature>
<feature type="compositionally biased region" description="Polar residues" evidence="5">
    <location>
        <begin position="5159"/>
        <end position="5170"/>
    </location>
</feature>
<feature type="compositionally biased region" description="Low complexity" evidence="5">
    <location>
        <begin position="5174"/>
        <end position="5203"/>
    </location>
</feature>
<feature type="compositionally biased region" description="Low complexity" evidence="5">
    <location>
        <begin position="5458"/>
        <end position="5486"/>
    </location>
</feature>
<feature type="compositionally biased region" description="Low complexity" evidence="5">
    <location>
        <begin position="5834"/>
        <end position="5858"/>
    </location>
</feature>
<feature type="compositionally biased region" description="Polar residues" evidence="5">
    <location>
        <begin position="5859"/>
        <end position="5874"/>
    </location>
</feature>
<feature type="compositionally biased region" description="Low complexity" evidence="5">
    <location>
        <begin position="5875"/>
        <end position="5889"/>
    </location>
</feature>
<feature type="compositionally biased region" description="Polar residues" evidence="5">
    <location>
        <begin position="5890"/>
        <end position="5901"/>
    </location>
</feature>
<feature type="compositionally biased region" description="Low complexity" evidence="5">
    <location>
        <begin position="6045"/>
        <end position="6059"/>
    </location>
</feature>
<feature type="compositionally biased region" description="Polar residues" evidence="5">
    <location>
        <begin position="6060"/>
        <end position="6071"/>
    </location>
</feature>
<feature type="compositionally biased region" description="Low complexity" evidence="5">
    <location>
        <begin position="6172"/>
        <end position="6185"/>
    </location>
</feature>
<feature type="compositionally biased region" description="Polar residues" evidence="5">
    <location>
        <begin position="6186"/>
        <end position="6197"/>
    </location>
</feature>
<feature type="compositionally biased region" description="Low complexity" evidence="5">
    <location>
        <begin position="6456"/>
        <end position="6475"/>
    </location>
</feature>
<feature type="compositionally biased region" description="Polar residues" evidence="5">
    <location>
        <begin position="6852"/>
        <end position="6867"/>
    </location>
</feature>
<feature type="compositionally biased region" description="Low complexity" evidence="5">
    <location>
        <begin position="6946"/>
        <end position="6965"/>
    </location>
</feature>
<feature type="compositionally biased region" description="Polar residues" evidence="5">
    <location>
        <begin position="6999"/>
        <end position="7018"/>
    </location>
</feature>
<feature type="compositionally biased region" description="Low complexity" evidence="5">
    <location>
        <begin position="7172"/>
        <end position="7206"/>
    </location>
</feature>
<feature type="compositionally biased region" description="Low complexity" evidence="5">
    <location>
        <begin position="7300"/>
        <end position="7329"/>
    </location>
</feature>
<feature type="compositionally biased region" description="Low complexity" evidence="5">
    <location>
        <begin position="7400"/>
        <end position="7427"/>
    </location>
</feature>
<feature type="compositionally biased region" description="Polar residues" evidence="5">
    <location>
        <begin position="7476"/>
        <end position="7491"/>
    </location>
</feature>
<feature type="compositionally biased region" description="Low complexity" evidence="5">
    <location>
        <begin position="7492"/>
        <end position="7532"/>
    </location>
</feature>
<feature type="compositionally biased region" description="Low complexity" evidence="5">
    <location>
        <begin position="7734"/>
        <end position="7766"/>
    </location>
</feature>
<feature type="compositionally biased region" description="Low complexity" evidence="5">
    <location>
        <begin position="7922"/>
        <end position="7944"/>
    </location>
</feature>
<feature type="compositionally biased region" description="Polar residues" evidence="5">
    <location>
        <begin position="7945"/>
        <end position="7987"/>
    </location>
</feature>
<feature type="compositionally biased region" description="Low complexity" evidence="5">
    <location>
        <begin position="8088"/>
        <end position="8101"/>
    </location>
</feature>
<feature type="compositionally biased region" description="Polar residues" evidence="5">
    <location>
        <begin position="8102"/>
        <end position="8113"/>
    </location>
</feature>
<feature type="compositionally biased region" description="Low complexity" evidence="5">
    <location>
        <begin position="8372"/>
        <end position="8391"/>
    </location>
</feature>
<feature type="compositionally biased region" description="Polar residues" evidence="5">
    <location>
        <begin position="8768"/>
        <end position="8783"/>
    </location>
</feature>
<feature type="compositionally biased region" description="Low complexity" evidence="5">
    <location>
        <begin position="8862"/>
        <end position="8881"/>
    </location>
</feature>
<feature type="compositionally biased region" description="Polar residues" evidence="5">
    <location>
        <begin position="8915"/>
        <end position="8934"/>
    </location>
</feature>
<feature type="compositionally biased region" description="Low complexity" evidence="5">
    <location>
        <begin position="9067"/>
        <end position="9081"/>
    </location>
</feature>
<feature type="compositionally biased region" description="Low complexity" evidence="5">
    <location>
        <begin position="9088"/>
        <end position="9122"/>
    </location>
</feature>
<feature type="compositionally biased region" description="Low complexity" evidence="5">
    <location>
        <begin position="9335"/>
        <end position="9360"/>
    </location>
</feature>
<feature type="compositionally biased region" description="Polar residues" evidence="5">
    <location>
        <begin position="9409"/>
        <end position="9424"/>
    </location>
</feature>
<feature type="compositionally biased region" description="Low complexity" evidence="5">
    <location>
        <begin position="9425"/>
        <end position="9465"/>
    </location>
</feature>
<feature type="compositionally biased region" description="Low complexity" evidence="5">
    <location>
        <begin position="9566"/>
        <end position="9585"/>
    </location>
</feature>
<feature type="compositionally biased region" description="Low complexity" evidence="5">
    <location>
        <begin position="9612"/>
        <end position="9624"/>
    </location>
</feature>
<feature type="compositionally biased region" description="Polar residues" evidence="5">
    <location>
        <begin position="9625"/>
        <end position="9661"/>
    </location>
</feature>
<feature type="compositionally biased region" description="Low complexity" evidence="5">
    <location>
        <begin position="9662"/>
        <end position="9674"/>
    </location>
</feature>
<feature type="compositionally biased region" description="Polar residues" evidence="5">
    <location>
        <begin position="9892"/>
        <end position="9903"/>
    </location>
</feature>
<feature type="compositionally biased region" description="Polar residues" evidence="5">
    <location>
        <begin position="9921"/>
        <end position="9933"/>
    </location>
</feature>
<feature type="compositionally biased region" description="Low complexity" evidence="5">
    <location>
        <begin position="9934"/>
        <end position="9973"/>
    </location>
</feature>
<feature type="compositionally biased region" description="Low complexity" evidence="5">
    <location>
        <begin position="10120"/>
        <end position="10130"/>
    </location>
</feature>
<feature type="compositionally biased region" description="Polar residues" evidence="5">
    <location>
        <begin position="10131"/>
        <end position="10166"/>
    </location>
</feature>
<feature type="compositionally biased region" description="Low complexity" evidence="5">
    <location>
        <begin position="10196"/>
        <end position="10271"/>
    </location>
</feature>
<feature type="compositionally biased region" description="Low complexity" evidence="5">
    <location>
        <begin position="10394"/>
        <end position="10421"/>
    </location>
</feature>
<feature type="compositionally biased region" description="Polar residues" evidence="5">
    <location>
        <begin position="10750"/>
        <end position="10791"/>
    </location>
</feature>
<feature type="compositionally biased region" description="Low complexity" evidence="5">
    <location>
        <begin position="10792"/>
        <end position="10828"/>
    </location>
</feature>
<feature type="compositionally biased region" description="Low complexity" evidence="5">
    <location>
        <begin position="10887"/>
        <end position="10937"/>
    </location>
</feature>
<feature type="compositionally biased region" description="Low complexity" evidence="5">
    <location>
        <begin position="10950"/>
        <end position="11032"/>
    </location>
</feature>
<feature type="compositionally biased region" description="Low complexity" evidence="5">
    <location>
        <begin position="11278"/>
        <end position="11291"/>
    </location>
</feature>
<feature type="compositionally biased region" description="Polar residues" evidence="5">
    <location>
        <begin position="11292"/>
        <end position="11317"/>
    </location>
</feature>
<feature type="compositionally biased region" description="Low complexity" evidence="5">
    <location>
        <begin position="11566"/>
        <end position="11682"/>
    </location>
</feature>
<feature type="compositionally biased region" description="Polar residues" evidence="5">
    <location>
        <begin position="11683"/>
        <end position="11697"/>
    </location>
</feature>
<feature type="compositionally biased region" description="Polar residues" evidence="5">
    <location>
        <begin position="11754"/>
        <end position="11769"/>
    </location>
</feature>
<feature type="compositionally biased region" description="Low complexity" evidence="5">
    <location>
        <begin position="11770"/>
        <end position="11779"/>
    </location>
</feature>
<feature type="compositionally biased region" description="Low complexity" evidence="5">
    <location>
        <begin position="11818"/>
        <end position="11880"/>
    </location>
</feature>
<feature type="compositionally biased region" description="Polar residues" evidence="5">
    <location>
        <begin position="11881"/>
        <end position="11896"/>
    </location>
</feature>
<feature type="compositionally biased region" description="Polar residues" evidence="5">
    <location>
        <begin position="11903"/>
        <end position="11912"/>
    </location>
</feature>
<feature type="compositionally biased region" description="Low complexity" evidence="5">
    <location>
        <begin position="11913"/>
        <end position="11949"/>
    </location>
</feature>
<feature type="compositionally biased region" description="Low complexity" evidence="5">
    <location>
        <begin position="12067"/>
        <end position="12091"/>
    </location>
</feature>
<feature type="compositionally biased region" description="Polar residues" evidence="5">
    <location>
        <begin position="12092"/>
        <end position="12103"/>
    </location>
</feature>
<feature type="compositionally biased region" description="Low complexity" evidence="5">
    <location>
        <begin position="12280"/>
        <end position="12309"/>
    </location>
</feature>
<feature type="compositionally biased region" description="Polar residues" evidence="5">
    <location>
        <begin position="12310"/>
        <end position="12323"/>
    </location>
</feature>
<feature type="compositionally biased region" description="Low complexity" evidence="5">
    <location>
        <begin position="12364"/>
        <end position="12412"/>
    </location>
</feature>
<feature type="compositionally biased region" description="Polar residues" evidence="5">
    <location>
        <begin position="12413"/>
        <end position="12439"/>
    </location>
</feature>
<feature type="compositionally biased region" description="Low complexity" evidence="5">
    <location>
        <begin position="12440"/>
        <end position="12452"/>
    </location>
</feature>
<feature type="compositionally biased region" description="Polar residues" evidence="5">
    <location>
        <begin position="12468"/>
        <end position="12477"/>
    </location>
</feature>
<feature type="compositionally biased region" description="Low complexity" evidence="5">
    <location>
        <begin position="12478"/>
        <end position="12569"/>
    </location>
</feature>
<feature type="compositionally biased region" description="Low complexity" evidence="5">
    <location>
        <begin position="12624"/>
        <end position="12639"/>
    </location>
</feature>
<feature type="compositionally biased region" description="Low complexity" evidence="5">
    <location>
        <begin position="12681"/>
        <end position="12692"/>
    </location>
</feature>
<feature type="compositionally biased region" description="Low complexity" evidence="5">
    <location>
        <begin position="12794"/>
        <end position="12805"/>
    </location>
</feature>
<feature type="compositionally biased region" description="Low complexity" evidence="5">
    <location>
        <begin position="12990"/>
        <end position="13003"/>
    </location>
</feature>
<feature type="compositionally biased region" description="Low complexity" evidence="5">
    <location>
        <begin position="13073"/>
        <end position="13086"/>
    </location>
</feature>
<feature type="site" description="Cleavage; by autolysis" evidence="4">
    <location>
        <begin position="13234"/>
        <end position="13235"/>
    </location>
</feature>
<feature type="disulfide bond" evidence="3">
    <location>
        <begin position="13134"/>
        <end position="13140"/>
    </location>
</feature>
<feature type="disulfide bond" evidence="3">
    <location>
        <begin position="13153"/>
        <end position="13162"/>
    </location>
</feature>
<feature type="sequence variant" id="VAR_029507" evidence="6">
    <original>A</original>
    <variation>V</variation>
    <location>
        <position position="13274"/>
    </location>
</feature>
<feature type="sequence variant" id="VAR_029508" evidence="6">
    <original>H</original>
    <variation>Y</variation>
    <location>
        <position position="13453"/>
    </location>
</feature>
<feature type="sequence conflict" description="In Ref. 2; BAB12115/BAB12117." evidence="9" ref="2">
    <original>H</original>
    <variation>Y</variation>
    <location>
        <position position="12602"/>
    </location>
</feature>
<feature type="sequence conflict" description="In Ref. 2; BAB12115/BAB12117." evidence="9" ref="2">
    <original>C</original>
    <variation>R</variation>
    <location>
        <position position="13090"/>
    </location>
</feature>
<feature type="sequence conflict" description="In Ref. 4; AAD45882." evidence="9" ref="4">
    <original>E</original>
    <variation>A</variation>
    <location>
        <position position="13303"/>
    </location>
</feature>
<feature type="sequence conflict" description="In Ref. 4; AAD45882." evidence="9" ref="4">
    <original>A</original>
    <variation>T</variation>
    <location>
        <position position="13356"/>
    </location>
</feature>
<name>MUC3B_HUMAN</name>
<dbReference type="EMBL" id="AJ291390">
    <property type="protein sequence ID" value="CAC19572.1"/>
    <property type="molecule type" value="Genomic_DNA"/>
</dbReference>
<dbReference type="EMBL" id="AB038781">
    <property type="protein sequence ID" value="BAB12115.1"/>
    <property type="molecule type" value="Genomic_DNA"/>
</dbReference>
<dbReference type="EMBL" id="AB038783">
    <property type="protein sequence ID" value="BAB12117.1"/>
    <property type="molecule type" value="mRNA"/>
</dbReference>
<dbReference type="EMBL" id="AF007195">
    <property type="protein sequence ID" value="AAB84382.1"/>
    <property type="molecule type" value="Genomic_DNA"/>
</dbReference>
<dbReference type="EMBL" id="AF143371">
    <property type="protein sequence ID" value="AAD45882.1"/>
    <property type="molecule type" value="mRNA"/>
</dbReference>
<dbReference type="EMBL" id="AY307931">
    <property type="protein sequence ID" value="AAQ73825.1"/>
    <property type="molecule type" value="mRNA"/>
</dbReference>
<dbReference type="FunCoup" id="Q9H195">
    <property type="interactions" value="5"/>
</dbReference>
<dbReference type="MEROPS" id="S71.002"/>
<dbReference type="GlyGen" id="Q9H195">
    <property type="glycosylation" value="32 sites"/>
</dbReference>
<dbReference type="iPTMnet" id="Q9H195"/>
<dbReference type="PhosphoSitePlus" id="Q9H195"/>
<dbReference type="BioMuta" id="HGNC:13384"/>
<dbReference type="DMDM" id="510120772"/>
<dbReference type="jPOST" id="Q9H195"/>
<dbReference type="MassIVE" id="Q9H195"/>
<dbReference type="AGR" id="HGNC:13384"/>
<dbReference type="GeneCards" id="MUC3B"/>
<dbReference type="HGNC" id="HGNC:13384">
    <property type="gene designation" value="MUC3B"/>
</dbReference>
<dbReference type="MIM" id="605633">
    <property type="type" value="gene"/>
</dbReference>
<dbReference type="neXtProt" id="NX_Q9H195"/>
<dbReference type="InParanoid" id="Q9H195"/>
<dbReference type="PAN-GO" id="Q9H195">
    <property type="GO annotations" value="0 GO annotations based on evolutionary models"/>
</dbReference>
<dbReference type="PathwayCommons" id="Q9H195"/>
<dbReference type="Reactome" id="R-HSA-5083625">
    <property type="pathway name" value="Defective GALNT3 causes HFTC"/>
</dbReference>
<dbReference type="Reactome" id="R-HSA-5083632">
    <property type="pathway name" value="Defective C1GALT1C1 causes TNPS"/>
</dbReference>
<dbReference type="Reactome" id="R-HSA-5083636">
    <property type="pathway name" value="Defective GALNT12 causes CRCS1"/>
</dbReference>
<dbReference type="Reactome" id="R-HSA-5621480">
    <property type="pathway name" value="Dectin-2 family"/>
</dbReference>
<dbReference type="Reactome" id="R-HSA-913709">
    <property type="pathway name" value="O-linked glycosylation of mucins"/>
</dbReference>
<dbReference type="Reactome" id="R-HSA-977068">
    <property type="pathway name" value="Termination of O-glycan biosynthesis"/>
</dbReference>
<dbReference type="Pharos" id="Q9H195">
    <property type="development level" value="Tdark"/>
</dbReference>
<dbReference type="PRO" id="PR:Q9H195"/>
<dbReference type="Proteomes" id="UP000005640">
    <property type="component" value="Unplaced"/>
</dbReference>
<dbReference type="RNAct" id="Q9H195">
    <property type="molecule type" value="protein"/>
</dbReference>
<dbReference type="GO" id="GO:0005796">
    <property type="term" value="C:Golgi lumen"/>
    <property type="evidence" value="ECO:0000304"/>
    <property type="project" value="Reactome"/>
</dbReference>
<dbReference type="GO" id="GO:0005886">
    <property type="term" value="C:plasma membrane"/>
    <property type="evidence" value="ECO:0000304"/>
    <property type="project" value="Reactome"/>
</dbReference>
<dbReference type="CDD" id="cd00055">
    <property type="entry name" value="EGF_Lam"/>
    <property type="match status" value="1"/>
</dbReference>
<dbReference type="Gene3D" id="2.10.25.10">
    <property type="entry name" value="Laminin"/>
    <property type="match status" value="1"/>
</dbReference>
<dbReference type="InterPro" id="IPR000742">
    <property type="entry name" value="EGF-like_dom"/>
</dbReference>
<dbReference type="InterPro" id="IPR002049">
    <property type="entry name" value="LE_dom"/>
</dbReference>
<dbReference type="InterPro" id="IPR052504">
    <property type="entry name" value="Mucin_signaling_protection"/>
</dbReference>
<dbReference type="InterPro" id="IPR000082">
    <property type="entry name" value="SEA_dom"/>
</dbReference>
<dbReference type="InterPro" id="IPR036364">
    <property type="entry name" value="SEA_dom_sf"/>
</dbReference>
<dbReference type="PANTHER" id="PTHR24041">
    <property type="entry name" value="MUCIN"/>
    <property type="match status" value="1"/>
</dbReference>
<dbReference type="PANTHER" id="PTHR24041:SF22">
    <property type="entry name" value="MUCIN-3A-RELATED"/>
    <property type="match status" value="1"/>
</dbReference>
<dbReference type="SMART" id="SM00181">
    <property type="entry name" value="EGF"/>
    <property type="match status" value="2"/>
</dbReference>
<dbReference type="SMART" id="SM00200">
    <property type="entry name" value="SEA"/>
    <property type="match status" value="1"/>
</dbReference>
<dbReference type="SUPFAM" id="SSF82671">
    <property type="entry name" value="SEA domain"/>
    <property type="match status" value="1"/>
</dbReference>
<dbReference type="PROSITE" id="PS00022">
    <property type="entry name" value="EGF_1"/>
    <property type="match status" value="2"/>
</dbReference>
<dbReference type="PROSITE" id="PS01186">
    <property type="entry name" value="EGF_2"/>
    <property type="match status" value="1"/>
</dbReference>
<dbReference type="PROSITE" id="PS50026">
    <property type="entry name" value="EGF_3"/>
    <property type="match status" value="1"/>
</dbReference>
<dbReference type="PROSITE" id="PS50024">
    <property type="entry name" value="SEA"/>
    <property type="match status" value="1"/>
</dbReference>
<sequence>MQLLGLLSILWMLKSSPGATGTLSTATSTSHVTFPRAEATRTALSNSPHSRYLAEWPQGVPQLASPAPGHRENAPMTLTTSPHDTLISETLLSSLVSSNTSTTPTSKFAFKVETTPPTVLVYLATTECVYPTSFIITISHPTSICVTTTQVTFTSSYTPTPVTQKPVTTVTRTYPMTTTEKGTSAMISSPSTTTARETPIVTVTPSSSVSATDTTFHTTISSTTRTTERTPLPTGSIHTTMSPTPVFTTLKTAVTSTSPITSTITSTNTVTSMTTTTSRPTATNTLSSLMSNILSSTPVPSTEMTTSHTTDTNPLSTLVTTLPTTITRSTPTSETTYPASPTSTVTDSTTEITYSTVLTGTLSPTTTLPPTSSSQQTTETPMTPTTKLVTTTTETTSQSSLNFSSSAIYSTVSTSTTAISSLPPTSGTMVTSTNIVPTADLKPELILLEVHDQRIQAKNPRYSQTPFTSSTATSPETTTLTCTNDISTESLTTAMTSTTPVISAITPKTTVTSMTTTASGPTTTNTLSSLTSSILSSTPAPNTEVITSHTTTTTPPSTLVTTLPTAIARSTPTSETTYPISPTGTVTDSMTEITYSTSMTGTWSTATTLPLTSCSLPTIETATTPTTNLGNTTTETTSHSTPSFTSSAIYSTVNISTTTISSFPPSSGTMVTFTTMNPSSLSTDISTTTLKNITQPSVGSTGFLTAATDLTSTFTVSSSSAMSTSVTPSAPSIQNKEISTLVSTTTTTSPTERMTLTSTENTPTSYILTTSPVTYSFSPSMSASSDWTTDTESISSAPAITSTLHTTAESTLAPTTTNSFTTSANMEPPSTAVATTGTGQSTFTSSTATFLETTTLTPTTDISTESFMTPMISTTPITSSMTLRNTMTSMTTAASRPTTTNTLSSLTSSILSSTPVPSTEVITSQTTNTTSPSTLVTTLPTTITTSTPTSETTYSTSPTSTVTDSTTETTYSTSITGTLSTEISLPATTSSLITKGISMTSTRNLVTTTNENTSHSTPTFTLTIHSTISTSTTAISSVPTTSGPIVTSTTMTPSSLTADIPTTTLTTIAQPSMGSTVFLTTATDLASTFTVSSSSAMSASVIPSSPSIQNTETSSLVNMTSANTPSVRPNFASTHSTLTSSLLMTFPETYSFSPSMSASNDRTTHTESISSPPASTSTLQTTAEYTLAPTTTTSFTTPRTMELPLSTVATRGTGQTTFTSPTATFSETTTLTPTTDISTESLTTAMTSPPNNVSVTSTNIVTSMTTTTSPHTTTHSFTSLTSMTLSSTPVPSTEAITSGITNTIPASTLVTTLPTPNASSVTTFETTYPNSPTGPGTNSTTKITYPITMTETSSNATSLPLISPSVSTAETAKTPTTILVTTTTKTTSHSTTSFTSSTIYSTGSTYTTAITSVPTTLGNMVTSTSRIPSSLSTDIPTSQPTTITPSSVGITGSLPMMTDLTSVYTVSSMSARLTTVIPSSPTVQNTETSSFVSMTSATTPSERPTFTSTENTPTWSLLTSFPMTHSFSSISASSAGTTHTESISSPPATTSTLHTTAESTLSPTITSFTTSTTREPPSTSVATTGTGQTTFPSSTATFPETTTLTPTIDISTESLTTAMTSTPPITSSVTPTNTVTSMTTTTSWPTASNMLSSLTGSILSSTPVPSTEVITSQTTNTTRPSTLVMTLPTTITTSTPTSETTYSTSPTSTVTDSMTETTYSTSIAGTLSTEISLPATTSSLTTKGTSTISTRNLVTTTNETTSHSTPSFTSTIHSTVSTSTTAISSVSTTSGPMVTSTTMTLSSLTTDIPTTTLTTITQPSVGSTAFLTTASGLTSTFTVSSSSAMSTSVIPSSPNIQNTETSTLVSTTIAVSPTERTTLTSTKKTLTSSALTRFPVTYPFSSSTSASSDLTTDMESISSLPAITSTLHTTAESTPAPTSITSFTTSATMEPPSSSVAATDTGQTTFTSSTATFPETITLTPNTNMSRESLMTPMTSTTPITSAITPTNTVTSMTTMTSPPTTTNSFTSLSSKILSSTPVPSTEAIISGTTNTIPPSTLVTTLPTPNASSMTTSETTYPNSPTGPVTNSMSKISYPASMTQTSSTATSLPPNSPSGSTTEIAKSPTTNLVTNAIKATSHTTTTYTSSTIYFTASTYTSAMTSVSLGTMVTSTSMTPSTVSTSIPTSQPKTVNSSSGGITGSLPMMTDLTSGYTVSSMSALPTTVIPTSLTVQNTETSIFVSMTSATTPSGRPTFTSTVNTPTRSLLTSFPTTHLFSSSMSESSAGTTHTESISSPPATTSTLHTTAESTPSCTTTTSFITSTTMEPLSTIVATTGTVKTTVTSSTATFRETTTLTSTTDISTESLMTAMTSTTRLTSAITSKTTLTSLKTTASRPTANSTLSSLTSSILSSTLVPSTDMITSHTTNLTRSSPLLATLPTTITRSTPTSETTYPTSPTSTVKGSTTSIRYSTSMTGTLSMETSLPPTSSSLPTTETATTPTTNLVTTEITSHSTPSFSSSTIHSTVSTPTTVISSGPPTSGTIVTSITVTPSSLSTDIPLTTPTTITHHSVGSTESLLTATDLTSTFTVSSSSAMSTSDIPSSPSIQNTETSSLVSMTSATIPSVRPTFTSTHNTLTSSLLTTFPGTYSFSSSMSASSDGTTHTETITSLPASTSTLHTTAESTTAHTTTTSFTTSTTMESPSSSVATTSTGQTTFSSSTATFTETTTLTPTTDFSEETLTTAMTSTPPITSSITPTNTVTSMTTMTSWPTATNTLSSLTTNILSSTPVPSTERTTSHTTNINPVSTLVTTLPTTITRSTPTSETTYPISSTSTVTESTTEITYSTTMTETSSSATSLPLTSPLVSTTETAKTPTTILVTTTTKTTSHSTTSFTSSTVYSTASTHTTAITSVPTTLGTMVTSTSRIPSSLSTDIPTSQPTTITPSSVGITGSLPMMTDLTSVYTVSSMSARPTSVIPSSPTVQNTETSIFVSMMSATTPSGGSTFTSTENTPTRSLLTSFPVTHSFSSSMSASSVGTTHTQSISSPPAITSTLHTTAESTPSPTTTMSFTTFTKMETPSSTVATTGTGQTTFTSSTATSPETNTLTPTPDISTGSFKTAVSSTPPITSSVTSTYTVTFMTTTAPLPTATNTLPSFTSSVSSSMTVPSTEAIASDTTNTTPLSTLVTIFSNSDTSSTPTSETTYPTSLTSALADSTNRITYSTSVTGTLSTVTSLRPTSPSLPTTVTATIPTTNLVTKTTKTTSHSTPSFTSVITTTKTTSHNPPSFTSRISTTEITSHSSSFTSLITTTKTTSHSTPSFTSPIATTKTSSHSSPSFTSSIATLETTSHSTPSFTSSITTNSHSTPRFSSSIATRETTSHSTSSFTPSIATTKTNSNSTPSFTSLIATTKITTHSTPSLTSLITTTETTSHSTPSFTSSMATTKTTSHSTPSFTSPIATRETTSHSTPSFTSLITTTKTTSHSTPSFTSLITIIETTSHISSFTSSIATTETTSHSTPSITSLIVTKTTSHSTPSFTSIATTETTSHSTTSFTSSTATTETTSRSTPSFTSLINTTETTSHSTPSFISLITTTETASYSTSSFSSLITTTRTTSQSTPSLTSSITTAETISYSSPSFPSLITITKSTSHSTASFSSSITTTETNLHSTPSFTSSTTTTETASHSTSSFTSSITTTKATSHSTPSFTSSIATTETTSHNTPNITTSISTTATTFHSTPRFTSSITTIETPSHGTPSFTSSITSTETTSHSSPSFISSITTTEITSHSTPRFTSSITTMETPSHSTPNFTSSITTAETTSHRTSSFTFSITNTKTTSHSTSIFTSSIITETSSHSSPSVTSAITTTETTSHNTPSYTFSIATTKNTSQSTPSFTSSIITTETIPQSTPSFTSCITTNKTIPHSTPSLTSVITTTKTTSNSIQGFTFSITPTETTSHSTPSFTSSIAATETTSHHTPSFNSVIATSETNSHSAPSFSSLIANTETTSHSTPSFTSLIATTETTSRSTPSYTSAITTTETTSHRTPSFTSSIATESTSPSTAIFTSSITTTETTSNSTASLTSSMTTTETTSHSTPSLTSSMTATETTSHSTPSFTSLIITTETTSHSTPSLTSLITSTETTSHSTPSLTSLITTTETTSHSTPSFTSSITITESISYSNPGFNSSITTTETTSHHTPNFPSSITNTETTSQSTSNFTYSTTTTKTTSHGTPSFTSSNTTTEMTSHSTPSFTSSITTTETTSHSTLNFTCLITTTNSTSHSPPSFTSVSTTTETTSHSTPIFTSSITTTESTSHSTPSFTSSITGIKTISHNTPSFSSLITATETISHSTPSFSSLITTTETISHSTPSFTSLITSTETASHSSPSFTSSITTIETTSHSTPSLTSLITTTKTTSQSPPSFTSSIISTEAASHSTPSFTSSITTTETPSHSTHSFTSLIAITEIISHSTPGLSSSIATTETTSHSTLRFTSVIASTETISYSTPSLNSPITTTEITSHSTPSFNSSITTTETLSHSTPSLTSAITNTETMSHSIPGFTSLITTTETTSNSSPSFTSSITNTKTTSYSPPGFTSSIPATETTSRSPPGFTSSITTTETTSHSTSSLTSSITTKKTISYSPSSFTSSITTTESPSHSTPSLTSLITATKSTTHNPPSFTSAITTTGNTSHSTPIFTSSIATTESTSHSNPSFTSSITSTKSISHSTPSFSSLITTTETTSQSSSSLSSLITTTKYTPYNPPSFTSAITTTGITSHSTPIFTSSITTTETTSHNTSTLTSSITTTETASHSTSSFTSSITSTETTSHSTPSLTSSITATGTTSHSTPSFTSLITITESTSHSTTSFTSSITTTETTSHSTPSFTSLIATTEIISHSTPSYTSSIATTETPSHSTPSFPFSVMTTETISHSTPSLNSAIITTESMSHSIPGFASLITTSETTSHSLPSFTSSSTTTETPSHSPPGFSSSIATSKTISSCPPRFTSAITTTETTSHSTPRFTSAIASTKITSQSTPSLTSLITTTGTSSHSTLGLSSSIATTETTSHSTASFTSSIATTETTSHNTPGFTSLIVTTETSSQSTTSFTSSITTTETTSHTTASITSSITTTEIISRSTPSYTSSIATTETPSHITPSFTSTITTSESTSHSNPSLTSAITTTETRSHSPPIFTSSITTTETTSHNTPSFTSSITTTETTTRSLPGFTFSIATTKTTSHSPPSFTSLITTTETPSHSNPSFTSFITTTESTSHSLPGFTSVIATTKTTLHSTPIFTSSITTAETTSHNPPGFTFLIPTTETISHSPPSFTSSITIIETHSHSNPSFTSLITTTKSTSQTPLGFTSAIATTGITPHSTPIFTSLVATTESTSHSTPSFTSLITSTETISQSTPSFSSLMTATETTSHSTPSLTSLITTIKSASKNPPTFTSAIATTGITSRSTPIFTSSITNTESTSRSTPSFTFSTTSTETTSHSTPSFTSSITTIETTSHSTPSVTYSITTTRTTSHNTPSFTSFIITTESTFHSTTSFASSITTTDNTSHSMPSFTSSIATTEIISHSTPSFPSSITNTETISHRTPSLTSAITTTETMSYSIPGFISSITTTETTSHLPPRFTSLITTTKTTSHSPPSVTSLITRTETTSHSPPSFTSSSTTTETPSHSTPGFSSSIATSKTTSTSPLRFTFVIGTTKTTSYSTPRFTSVIASTKTTSHSTPSLTSLITTTGTSSHSTLGLSSSIVTTETTSHSTASFTSSIATTETVSQNTPGFTSSIATTEITSHSTPSFTSSITTMETTSQSAPSFTSLITVTGSTSHSTASFTSSITTTETTSYSTPSITSSITTTERTSHSTPSYTSSIATRETPSHTVPSFTSSITTTESTSHSNPSLTSAITTTETRSHSPPIFTSSITIIETTSHSTASFTSSMTTTETTSLSPPGFTFSISTTEITSHSTPSFTSSITTTETTSQSSPSFTSLITITGSTSHSTASFTSSITTTETTSHSTRSITSSITTTKRTSHSSLSYTSSIATSETPSHTVPSFTSSITTTDSTSHSNPSLTSAITTTETRSHSPPIFTSSITTIETTSHSTPSFTSLMTTTETTSLSPPAFTFSISTTETNSHSPPSFTSSIATTETPSHSPPSFTSLITTTESTSHSPLSFTSVITTTESTSHSTPSFTSSIATTETTSHTPPSFTSLITTTETPSHSNPSFTSLITATESTSHSPPSFTSAIATTGITSHSTPIFTSLIATTDSTSHSTPSFTSSITSTETISHSTPSFSSLITATKTTSHSTPSLTSLITTTKSTPHNASSFTSVSATTGITSRSTPIFTSSIATTDSTSHSTPSLTSLVTSTETASHSTPSFTSLITTIEATSHSTPSLTSSITTTGTTSHSTPSFTYLTTITESTSHSTPSLTSAITTTETMSHSILGFTPSIISPSTPSYISLIATTETPSHSTPSFPSSITTTQSASHSTPSLTSAISTTEAMSHSIPVFTSLITTTETTSHLPPRFTSLITTTKTTSHSPPSFTALITSTKTTSHSTPSFTSSIATTETTSHSPPSFTSSSTTTETHSHSTPGFSSSIATSKTTSTSPPRFTFAIATTKTTLHSTPRFTLAIASTKTTSHSTPSLTSLITTIETTSHCTPSLTSSITTSGTISHSTPSFTSLITITESTSHSTTSFPSSITTTETTSHSTPSFTSLIATTEIISHSTPSYTSSIATTETPSHSTPSFPFSITTTETIPHSTPSLNSAITTTETMSHSIPGFASSITTSETTSPFPPRFTSLITTTKTTSHSPPSFTASLTSTEATSHSPLSFTSVIASTKITSQSTPSLTSLITTTGTSSHNTLGLSSSVDTTKTTSHSTASFTSLIATTETTSHNTPGFTSSIATTEITSHSTPSFTSSITTMETTSRSSPSFTSLITITGSTSHSTASFTSSITTTETTSHSTPSITSSVTTAERTSHSTPSYAFSIATSETPSHTVPSFTSLITTTESTSHSNPSLTSAITTTETRSHSPPIFTSLITIIETTSHSTRSFTSSITTTVTTSHSPPGFTFSIPTTETTSHSPPSFTSSISITETPSHSPPSFTSFITTTKSTSHGPLSFSSVITTTETTSHSAPSFTSSIATAETTSHSPPGFTFWIPTTETTSHSPPSFTSLITATETASHSNPSSTSSITTTESTSHSPPRSTSAIATTGITSHSTPIFTSSIATTESTSHSTASFTSSITSTETISHSTPSFSSLITATKTTSHSTPSLTSLITTTKSTSQNPPSFTSVIATAGITSRSTPAFTSSITTTESTSQSTPSFTFSTTSTETTSHSTPSLTYLITTTRNNSHSTPSFTSLITITESTSHNTASFTSSITTTGNTSHSMPSFTSSIATTEIISHSTPSYTSSITTTETPSHSSPSFPSTITSTETISHRTPSLTSAITTTETMSHSIPGFISSITITETTSHLSPRFTSLITTTETISHSPPSFTSLTNSTETTSHSPPSFTSSSTTTETPSHSTPGFSSSIATSKTTSTSPPRFTFVIATTKTTSHSTPRFTSVIASTETTSHSTPSLNSLITTTGTSSHSTLGLSSSVTTTKTTSHSTPRFTSVIASTETTSHSTPSLNSLITTTGTSSHSTLGLSSSVTTTKTTSHSTPRFTSVIASTETTSHSTPSLNSLITTTGTSSHSTLGLSSSVTTTKTTSHSTASFTSSIATTETTSQNTPGFTSSIATTEITSHSPPSFTSSSTTTETPSHSTPGFSSSIATSKTTSTSPLRFTFVIGTTKTTSYSTPRFTSVIASTKTTSHSTPSLTSLITTTGTSSHSTFGLSSSIATTETTSHSTASFTSSIATTETMSQNIPGFTSSIATTEITSHSTPSFTSSITTTETTSQSSPSFTSLITITGSTSHSTASFTSSITTTETTSHSTRSITSSITTTKRTSHSTPSYTSSIATSETPSHTVPSFTSLITTTDSTSHSNPSLTSAITTTETRSHSPPIFTSSITTIETTSHSTPSFTSLMTTTETTSLSPPAFTFSISTTETNSHSPPSFTSSIATTETPSHSPPSFTSLITTTESTSHSPLSFTSVITTTESTSHSTPSFTSSIATTETTSHTPPSFTSLITTTETPSHSNPSFTSLITATESTSHSPPSFTSAIATTGITSHSTPIFTSLIATTDSTSHSTPSFTSSITSTETISHSTPSFSSLITATKTTSHSTPSLTSLITTTKSTPHNASSFTSVSATTGITSRSTPIFTSSIATTDSTSHSTPSLTSLVTSTETASHSTPSFTSLITTIEATSHSTPSLTSSITTTGTTSHSTPSFTYLTTITESTSHSTPSLTSAITTTETMSHSILGFTPSIISPSTPSYISLIATTETPSHSTPSFPSSITTTQSASHSTPSLTSAISTTEAMSHSIPVFTSLITTTETTSHLPPRFTSLITTTKTTSHSPPSFTALITSTKTTSHSTPSFTSSIATTETTSHSPPSFTSSSTTTETHSHSTPGFSSSIATSKTTSTSPPRFTFAIATTKTTLHSTPRFTLAIASTKTTSHSTPSLTSLITTIETTSHCTPSLTSSITTSGTISHSTPSFTSLITITESTSHSTTSFPSSITTTETTSHSTPSFTSLIATTEIISHSTPSYTSSIATTETPSHSTPSFPFSITTTETIPHSTPSLNSAITTTETMSHSIPGFASSITTSETTSPFPPRFTSLITTTKTTSHSPPSFTASLTSTEATSHSPLSFTSVIASTKITSQSTPSLTSLITTTGTSSHNTLGLSSSVDTTKTTSHSTASFTSLIATTETTSHNTPGFTSSIATTEITSHSTPSFTSSITTMETTSRSSPSFTSLITITGSTSHSTASFTSSITTTETTSHSTPSITSSVTTAERTSHSTPSYAFSIATSETPSHTVPSFTSLITTTESTSHSNPSLTSAITTTETRSHSPPIFTSLITTTETTSHSTRSFTSSITTTVTTSHSPPGFTFSIPTTETTSHSPPSFTSSISITETPSHSPPSFTSFITTTKSTSHGPLSFSSVITTTETTSHSAPSFTSSIATAETTSHSPPGFTFWIPTTETTSHSPPSFTSLITATETASHSNPSSTSSITTTESTSHSPPRSTSAIATTGITSHSTPIFTSSIATTESTSHSTASFTSSITSTETISHSTPSFSSLITATKTTSHSTPSLTSLITTTKSTSQNPPSFTSAIATAGITSRSTPAFTSSITTTESTSQSTPSFTFSTTSTETTSHSTPSFTSLITTIETTSHSTPSLTYLITTTRNNSHSTPSFTSLITITESTSHNTASFTSSITTTGNTSHSMPSFTSSIATTEIISLSTPSYTSSITTTETPSHSSPSFPSSITSTETISHRTPSLTSAITTTETMSHSIPGFISSITITETTSHLSPRFTSLITTTETISHSPPSFTSLTNSTETTSHSPPSFTSSSTTTETPSHSTPGFSSSIATSKTTSTSPPRFTFVIATTKTTSHSTPRFTSVIASTETTSHSTPSLNSLITTTGTSSHSTLGLSSSVTTTKTTSHSTASFTSSIATTETTSQNTPGFTSSIATTEITSHSTPSFTSSITTTKSTSHSNPSLTSAIVTTETRSHSRPIFTSSITTTETTSHRTPSFTSSIATAETTSHSPPSFTSLITTSETPSHSNPSFTSLITTTESTSHSPPSFTSVISTTGITSHSTLIFTSLIATTKSTSHGTPSFPSSISSTETISHSTPSFSSLITATKTTSHGTPSLTSLIATTKSTPQNPSSFTSAITTRAITSRSTPIFTSSIATIEITSHSTPSFTSSITTTETTSQNSPSFTSLITITGSTSHSTASFTSSITTTETTSHSTPRITSSITTTEKTSHSTPSYTSLIATSEAPSYTVPTFTSSITTTESTSHSNPSLTSAITNTETRSHSPPIFTSLITITETTSHSPPSFTSLITSTETTSHSPPSFTSSSTTTETPSHSTPGFSSSIATSKTISTSPPRFTFAIATTKTTSHSTPKFTSVIASTKTTSQSTPSLNSLITTTGTSSHSTLSLSSLIATTETTSHTTARFSSSIATTETTSHNTPGFTSSIATTEITSDSTPSFTSSVTTTETTSQSSPSFTSLITITGSTSHSSASFTSSITTTETTSHSTPNITSSVTTTERTSHSTPSYTSSIATGETPSHTVPSFTSLITTTKSASHSNPSLSSAIITTETRSHSPPIFTSSITTTETTSHSPPSFTSLITTTETTSRSPPGFTFSISTTETTSHSPPSFTSSITTTETPSHSPPSFTSLITTTESTSHSPLSFTSSIATTESNSYSTPSFTSLITTIQATSHSTPSLPSSITTTGTTSHSPPIFTYLTTITESTSHLSTSFTSSITTNETTSHSMPSFTSSIATTEIILRSTPSYTSSIATSETPSHSTPSFPSSITTTQSISHSTPSLSSAITTTEAMSHSIPGFTSLITTAEATSHLPPRFTSLITTTKTTSHSPPSFTASITSTKTTSHSTPGFTSLIVTTETTSHSSPSFTSSSTTTEIPSHSTPGFSSSIATSKTTSTSPPRFTFAISTTKTTLHSTPRFTLVIASTKTTSHSTPSFSSFITTTETISYSTSSLTSSITTIETTSHCTPSLNSSITTSKTTSHSTPSFTSLITITESTSHSTTSFPSSITTTETTSHSTPSFTSSIATTEIISHGTPSYISSMATTKTPSQSTPSLPSLITTTETISHSTPTLTSVNTTTQTMSHSIPGFTSLITTTETTSHNIPSFSSLITTTETTSHSPPRFTSSITTTKTPSDSTPVFTPSIATSETSSHSTPGYTSSTATTETMSHSTSSFTSSITTTETTSQRSPSFTSLITITESTSHSTARFTSSITTTEIASHSTPSFTSTIATTEIISHSTPSFTSSITTTETLSHSTPSLTPVNTTTETTSNSIPGFTSSITTTKTTSHSTPSFTSSITNTKTSSHSPPGFPSSIPTTETTSHSSPSFISSITATETTSHSTSSLTSSITTNETISHSPPSTSSITTTETPSHSTPSLTSLITTTKSTSHSPSSFTSAIATMRTTSHSTPSFTSSITSPETISHSTPSLNSLITATETISRTTPSFTSLIASTDTASHSTPSFPSSITTIETTAHSTSSLTSSITTTGATSHSTPSFTSLITITEFTSHSTTSFTSSITTTETTSHSTPSITSSIATTEIISHSTPSYTSSITTTETISHSTPSLTSSITTTETISHSTTSLTSAITATETISHSIPGFTSLITTTKTTSHLPPGFTSSIPTTKTTLHNAPSFTSSITGTETTSHSPPHFTSSITRTKTTSHRPPTFTSSITTTESPSHSIPGFSSLIATIETTSTSPPRFISAIATTETTSHSTLGLNSSIANTETTSHSTPGFNPMNATSETTSHSTPSLTFPITTTETTSHSTPGLCSLITTTETTSHSTPCFTSSITTTETTSHSTLIFTSSISTTATPPDSTPSFTSSIATTENTSHSTPSFTSSITTTKTTSQSSPSFTSLITITESTSNSTASFTSSITISETTSDSIPSFTSSIATIKTPSHSTPSFTSSITTTDSISYSTPSLTSAVTTTETTSHSIPGFTSSITSTETTSHSTPSFTSLITTTETTSHSPPSFTSLTTTTETTSHSPPRFTSSITSTETTSKSTPSFTSSISTTESTSHSTARFTSAITSTKTTSHSTSGFTSSNATTETTSHSTPGFSSLIATTGTTSHSTLSFTSLITTTETPLDSTAVFTSSITTSEATSHSTAGFTSSMVTTKTTSHSTPDFTSSIASTKTTSHSTPSFTSSITTTVSISHSTPSITTSIATTEIISHSTPSYASSIATTETPSHTTPSFTSSITTTENISHSTPSLTSVVTTTETRSHSPPSFTSSITTTEINSHSTPSFTSSIATIETTSHSPPGFTSLIPTTKTTLHSPPSFTSSITTTKTTSHSTSSLTSSMPTTKTTSHSPPSFNYLITTTKTPSQSTPSFISSITSTETISHSTPSLNSLITATEIISHTMPSFTSLITSTKTASHSTPSFTSLITTIETTSHSTPSLTSSIITTGTTSQSTPSFTSLITTTESTSHSTSSFTSSITTTETTSQSTPSFTSSIAVTETPSDSTPVFTSIATSETTSHSTASFTSLISTTETTSHSTPMFTSSVATMETTSHSTPSFTSSVTTTEIISHSTPSFTSSITTTEITSHSTPSYTSSIITTKTPSHSTPSFPSSITTTETISHSTPSLTSAITTTETMSHSIPGFTSSITTTETTSYLPPRFTSSIPITETTSYSALSFTSSITSTETTSHSAPNFSSSITSTETTSHSTPSFTSAITSTETTSHSTPILTSPIATTKNISHCTPGFSSSITTTETTSHSTPSFTFSITTTETTSHSTPGFASSITTTKTTSHSTPSFTSSIATSNTTSSSTPGFTSSIATTETTSRSTPGFTSSIVTTETTSPHTPGFTSSITTTETIPQSTPTFTSLITTREMTSHSTPSLTFSITTTKSTSYSPPSFTSSITSTESTSHSTPPFTSSITTNETTSHSTPSFTTSITKTKTTSHSTPSFTSSNSITDSRSHSTPPFTSSVTTPEMTSHNTPSFMSSIITTETTSHSTPSFTSSTIHSTVSSSTTAITSPFTTAETGVTSTPSSPSSLSTDIPTTSLRTLTPLSLSTSTSLTTTTDLPSIPTDISSLPTPIHIISSSPSIQSTETSSLVGTTSPTMSTVRATLRSTENTPISSFSTSIVVTPETPTTQAPPVLMSATGTQTSPVPTTVTFGSMDSSTSTLHTLTPSTALSKIMSTSQFPIPSTHSSTLQTTPSIPSLQTSLTSTSEFTTESFTRGSTSTNAILTSFSTIIWSSTPTIIMSSSPSSASITPVFATTIHSVPSSPYIFSTENVGSASITAFPSLSSSSTTSTSPTSSSLTTALTEITPFSYISLPSTTPCPGTITITIVPASPTDPCVEMDPSTEATSPPTTPLTVFPFTTEMVTCPSSISMQTTLATHMDTSSMTPESESSIIPNASSSTGTGTVPTNTVFTSTRLPTSETWLSNNSVIPTPLPGVSTIPLTMKPSSSLPTILRTSSKSTHPSPPTARTSETSVATTQTPTTLTTCRTTPITSWMTTQSTLTTTAGTCDNGGTWEQGQCACLPGFSGDRCQLQTRCQNGGQWDGLKCQCPSTFYGSSCEFAVEQVDLDVVETEVGMEVSVDQQFSPDLNDNTSQAYRDFNKTFWNQMQKIFADMQGFTFKGVEILSLRNGSIVVDYLVLLEMPFSPQLESEYEQVKTTLKEGLQNASQDANSCQDSQTLCFKPDSIKVNNNSKTELTPEAICRRAAPTGYEEFYFPLVEATRLRCVTKCTSGVDNAIDCHQGQCVLETSGPACRCYSTDTHWFSGPRCEVAVHWRALVGGLTAGAALLVLLLLALGVRAVRSGWWGGQRRGRSWDQDRKWFETWDEEVVGTFSNWGFEDDGTDKDTNFHVALENVDTTMKVHIKRPEMTSSSV</sequence>
<gene>
    <name evidence="11" type="primary">MUC3B</name>
</gene>